<keyword id="KW-0067">ATP-binding</keyword>
<keyword id="KW-0119">Carbohydrate metabolism</keyword>
<keyword id="KW-0418">Kinase</keyword>
<keyword id="KW-0547">Nucleotide-binding</keyword>
<keyword id="KW-0808">Transferase</keyword>
<accession>Q2SZ63</accession>
<gene>
    <name evidence="1" type="primary">anmK</name>
    <name type="ordered locus">BTH_I1239</name>
</gene>
<dbReference type="EC" id="2.7.1.170" evidence="1"/>
<dbReference type="EMBL" id="CP000086">
    <property type="protein sequence ID" value="ABC36908.1"/>
    <property type="status" value="ALT_INIT"/>
    <property type="molecule type" value="Genomic_DNA"/>
</dbReference>
<dbReference type="RefSeq" id="WP_025369774.1">
    <property type="nucleotide sequence ID" value="NZ_CP008785.1"/>
</dbReference>
<dbReference type="SMR" id="Q2SZ63"/>
<dbReference type="GeneID" id="45120988"/>
<dbReference type="KEGG" id="bte:BTH_I1239"/>
<dbReference type="HOGENOM" id="CLU_038782_0_0_4"/>
<dbReference type="UniPathway" id="UPA00343"/>
<dbReference type="UniPathway" id="UPA00544"/>
<dbReference type="Proteomes" id="UP000001930">
    <property type="component" value="Chromosome I"/>
</dbReference>
<dbReference type="GO" id="GO:0005524">
    <property type="term" value="F:ATP binding"/>
    <property type="evidence" value="ECO:0007669"/>
    <property type="project" value="UniProtKB-UniRule"/>
</dbReference>
<dbReference type="GO" id="GO:0016301">
    <property type="term" value="F:kinase activity"/>
    <property type="evidence" value="ECO:0007669"/>
    <property type="project" value="UniProtKB-KW"/>
</dbReference>
<dbReference type="GO" id="GO:0016773">
    <property type="term" value="F:phosphotransferase activity, alcohol group as acceptor"/>
    <property type="evidence" value="ECO:0007669"/>
    <property type="project" value="UniProtKB-UniRule"/>
</dbReference>
<dbReference type="GO" id="GO:0097175">
    <property type="term" value="P:1,6-anhydro-N-acetyl-beta-muramic acid catabolic process"/>
    <property type="evidence" value="ECO:0007669"/>
    <property type="project" value="UniProtKB-UniRule"/>
</dbReference>
<dbReference type="GO" id="GO:0006040">
    <property type="term" value="P:amino sugar metabolic process"/>
    <property type="evidence" value="ECO:0007669"/>
    <property type="project" value="InterPro"/>
</dbReference>
<dbReference type="GO" id="GO:0009254">
    <property type="term" value="P:peptidoglycan turnover"/>
    <property type="evidence" value="ECO:0007669"/>
    <property type="project" value="UniProtKB-UniRule"/>
</dbReference>
<dbReference type="CDD" id="cd24050">
    <property type="entry name" value="ASKHA_NBD_ANMK"/>
    <property type="match status" value="1"/>
</dbReference>
<dbReference type="Gene3D" id="3.30.420.40">
    <property type="match status" value="2"/>
</dbReference>
<dbReference type="HAMAP" id="MF_01270">
    <property type="entry name" value="AnhMurNAc_kinase"/>
    <property type="match status" value="1"/>
</dbReference>
<dbReference type="InterPro" id="IPR005338">
    <property type="entry name" value="Anhydro_N_Ac-Mur_kinase"/>
</dbReference>
<dbReference type="InterPro" id="IPR043129">
    <property type="entry name" value="ATPase_NBD"/>
</dbReference>
<dbReference type="NCBIfam" id="NF007139">
    <property type="entry name" value="PRK09585.1-3"/>
    <property type="match status" value="1"/>
</dbReference>
<dbReference type="NCBIfam" id="NF007140">
    <property type="entry name" value="PRK09585.1-4"/>
    <property type="match status" value="1"/>
</dbReference>
<dbReference type="PANTHER" id="PTHR30605">
    <property type="entry name" value="ANHYDRO-N-ACETYLMURAMIC ACID KINASE"/>
    <property type="match status" value="1"/>
</dbReference>
<dbReference type="PANTHER" id="PTHR30605:SF0">
    <property type="entry name" value="ANHYDRO-N-ACETYLMURAMIC ACID KINASE"/>
    <property type="match status" value="1"/>
</dbReference>
<dbReference type="Pfam" id="PF03702">
    <property type="entry name" value="AnmK"/>
    <property type="match status" value="1"/>
</dbReference>
<dbReference type="SUPFAM" id="SSF53067">
    <property type="entry name" value="Actin-like ATPase domain"/>
    <property type="match status" value="1"/>
</dbReference>
<feature type="chain" id="PRO_0000249989" description="Anhydro-N-acetylmuramic acid kinase">
    <location>
        <begin position="1"/>
        <end position="384"/>
    </location>
</feature>
<feature type="binding site" evidence="1">
    <location>
        <begin position="17"/>
        <end position="24"/>
    </location>
    <ligand>
        <name>ATP</name>
        <dbReference type="ChEBI" id="CHEBI:30616"/>
    </ligand>
</feature>
<comment type="function">
    <text evidence="1">Catalyzes the specific phosphorylation of 1,6-anhydro-N-acetylmuramic acid (anhMurNAc) with the simultaneous cleavage of the 1,6-anhydro ring, generating MurNAc-6-P. Is required for the utilization of anhMurNAc either imported from the medium or derived from its own cell wall murein, and thus plays a role in cell wall recycling.</text>
</comment>
<comment type="catalytic activity">
    <reaction evidence="1">
        <text>1,6-anhydro-N-acetyl-beta-muramate + ATP + H2O = N-acetyl-D-muramate 6-phosphate + ADP + H(+)</text>
        <dbReference type="Rhea" id="RHEA:24952"/>
        <dbReference type="ChEBI" id="CHEBI:15377"/>
        <dbReference type="ChEBI" id="CHEBI:15378"/>
        <dbReference type="ChEBI" id="CHEBI:30616"/>
        <dbReference type="ChEBI" id="CHEBI:58690"/>
        <dbReference type="ChEBI" id="CHEBI:58722"/>
        <dbReference type="ChEBI" id="CHEBI:456216"/>
        <dbReference type="EC" id="2.7.1.170"/>
    </reaction>
</comment>
<comment type="pathway">
    <text evidence="1">Amino-sugar metabolism; 1,6-anhydro-N-acetylmuramate degradation.</text>
</comment>
<comment type="pathway">
    <text evidence="1">Cell wall biogenesis; peptidoglycan recycling.</text>
</comment>
<comment type="similarity">
    <text evidence="1">Belongs to the anhydro-N-acetylmuramic acid kinase family.</text>
</comment>
<comment type="sequence caution" evidence="2">
    <conflict type="erroneous initiation">
        <sequence resource="EMBL-CDS" id="ABC36908"/>
    </conflict>
</comment>
<organism>
    <name type="scientific">Burkholderia thailandensis (strain ATCC 700388 / DSM 13276 / CCUG 48851 / CIP 106301 / E264)</name>
    <dbReference type="NCBI Taxonomy" id="271848"/>
    <lineage>
        <taxon>Bacteria</taxon>
        <taxon>Pseudomonadati</taxon>
        <taxon>Pseudomonadota</taxon>
        <taxon>Betaproteobacteria</taxon>
        <taxon>Burkholderiales</taxon>
        <taxon>Burkholderiaceae</taxon>
        <taxon>Burkholderia</taxon>
        <taxon>pseudomallei group</taxon>
    </lineage>
</organism>
<sequence>MQTGHPADGVYLGLMSGTSMDGVDGITVRFETGKPPAVLSEAFVGFADTLRDSLFALQQPGDDEIEREALAANALAARYAACCHEMLRAAGLSPDDVRALGVHGQTVRHRPERGYTRQINNAALLAELTRIDVIADFRSRDVAAGGQGAPLVPAFHATMFGSPDETRVVCNLGGISNITILPAARDGRDERNDAVRGHDCGPANALIDAWALRHLKRPFDEGGRFAARGTVDETLLAALLDEPYFRQSAPKSTGRDLFNADWLDAKLAGFRGLAPEDVQATLTALTAASVADEIARHAHDCRAVYVCGGGARNPVLLDALATALAARGLDAPVATTAALGVPPQQVESLAFAWLAYRFNARAPGNVSAVTGAAGERVLGALYPR</sequence>
<proteinExistence type="inferred from homology"/>
<reference key="1">
    <citation type="journal article" date="2005" name="BMC Genomics">
        <title>Bacterial genome adaptation to niches: divergence of the potential virulence genes in three Burkholderia species of different survival strategies.</title>
        <authorList>
            <person name="Kim H.S."/>
            <person name="Schell M.A."/>
            <person name="Yu Y."/>
            <person name="Ulrich R.L."/>
            <person name="Sarria S.H."/>
            <person name="Nierman W.C."/>
            <person name="DeShazer D."/>
        </authorList>
    </citation>
    <scope>NUCLEOTIDE SEQUENCE [LARGE SCALE GENOMIC DNA]</scope>
    <source>
        <strain>ATCC 700388 / DSM 13276 / CCUG 48851 / CIP 106301 / E264</strain>
    </source>
</reference>
<protein>
    <recommendedName>
        <fullName evidence="1">Anhydro-N-acetylmuramic acid kinase</fullName>
        <ecNumber evidence="1">2.7.1.170</ecNumber>
    </recommendedName>
    <alternativeName>
        <fullName evidence="1">AnhMurNAc kinase</fullName>
    </alternativeName>
</protein>
<name>ANMK_BURTA</name>
<evidence type="ECO:0000255" key="1">
    <source>
        <dbReference type="HAMAP-Rule" id="MF_01270"/>
    </source>
</evidence>
<evidence type="ECO:0000305" key="2"/>